<gene>
    <name type="primary">xynA</name>
</gene>
<sequence>MKKFKIRKLMARVLALALVFSTFFMVSKVDANAASYNLMETYGAKYGYSGNCVHTHMLRDSRIVNAIKKDSNIVTLGNEMKPDYLLGSRQATLISVDEAKRLGYYIPSNYKERYVPKIDFRTVDEAVKICYENGLKMRGHTLVWHSQTPTWLFRENYSGNGRFVNTATMDARLEFYVKSVMGHFYSGKYGSTLVYWDVCNETLHAQNSGWEAVYGSNKTNAVYVKKAFNYAYQVLEQYKLTNSVKLFYNDYNTYMEVNDVIKLVNYINQGKKVCAGVGMQSHLGTGFPSVDYYTNALNSFLRAGFEVQITELDITNKGDYDLNNYAYRLFKNINAAKKNGGNISCITWWGPSDAETWIRNEKPLIWSNIGVAKPAYDEVVKAFTETFGNPGSFTPQPTITPQPTPTPSGQT</sequence>
<proteinExistence type="inferred from homology"/>
<dbReference type="EC" id="3.2.1.8"/>
<dbReference type="PIR" id="A37755">
    <property type="entry name" value="A37755"/>
</dbReference>
<dbReference type="SMR" id="P23551"/>
<dbReference type="CAZy" id="GH10">
    <property type="family name" value="Glycoside Hydrolase Family 10"/>
</dbReference>
<dbReference type="UniPathway" id="UPA00114"/>
<dbReference type="GO" id="GO:0031176">
    <property type="term" value="F:endo-1,4-beta-xylanase activity"/>
    <property type="evidence" value="ECO:0007669"/>
    <property type="project" value="UniProtKB-EC"/>
</dbReference>
<dbReference type="GO" id="GO:0045493">
    <property type="term" value="P:xylan catabolic process"/>
    <property type="evidence" value="ECO:0007669"/>
    <property type="project" value="UniProtKB-UniPathway"/>
</dbReference>
<dbReference type="Gene3D" id="3.20.20.80">
    <property type="entry name" value="Glycosidases"/>
    <property type="match status" value="1"/>
</dbReference>
<dbReference type="InterPro" id="IPR044846">
    <property type="entry name" value="GH10"/>
</dbReference>
<dbReference type="InterPro" id="IPR031158">
    <property type="entry name" value="GH10_AS"/>
</dbReference>
<dbReference type="InterPro" id="IPR001000">
    <property type="entry name" value="GH10_dom"/>
</dbReference>
<dbReference type="InterPro" id="IPR017853">
    <property type="entry name" value="Glycoside_hydrolase_SF"/>
</dbReference>
<dbReference type="PANTHER" id="PTHR31490:SF90">
    <property type="entry name" value="ENDO-1,4-BETA-XYLANASE A"/>
    <property type="match status" value="1"/>
</dbReference>
<dbReference type="PANTHER" id="PTHR31490">
    <property type="entry name" value="GLYCOSYL HYDROLASE"/>
    <property type="match status" value="1"/>
</dbReference>
<dbReference type="Pfam" id="PF00331">
    <property type="entry name" value="Glyco_hydro_10"/>
    <property type="match status" value="1"/>
</dbReference>
<dbReference type="PRINTS" id="PR00134">
    <property type="entry name" value="GLHYDRLASE10"/>
</dbReference>
<dbReference type="SMART" id="SM00633">
    <property type="entry name" value="Glyco_10"/>
    <property type="match status" value="1"/>
</dbReference>
<dbReference type="SUPFAM" id="SSF51445">
    <property type="entry name" value="(Trans)glycosidases"/>
    <property type="match status" value="1"/>
</dbReference>
<dbReference type="PROSITE" id="PS00591">
    <property type="entry name" value="GH10_1"/>
    <property type="match status" value="1"/>
</dbReference>
<dbReference type="PROSITE" id="PS51760">
    <property type="entry name" value="GH10_2"/>
    <property type="match status" value="1"/>
</dbReference>
<organism>
    <name type="scientific">Butyrivibrio fibrisolvens</name>
    <dbReference type="NCBI Taxonomy" id="831"/>
    <lineage>
        <taxon>Bacteria</taxon>
        <taxon>Bacillati</taxon>
        <taxon>Bacillota</taxon>
        <taxon>Clostridia</taxon>
        <taxon>Lachnospirales</taxon>
        <taxon>Lachnospiraceae</taxon>
        <taxon>Butyrivibrio</taxon>
    </lineage>
</organism>
<reference key="1">
    <citation type="journal article" date="1990" name="J. Bacteriol.">
        <title>Cloning, sequencing, and expression of a xylanase gene from the anaerobic ruminal bacterium Butyrivibrio fibrisolvens.</title>
        <authorList>
            <person name="Mannarelli B.M."/>
            <person name="Evans S."/>
            <person name="Lee D."/>
        </authorList>
    </citation>
    <scope>NUCLEOTIDE SEQUENCE [GENOMIC DNA]</scope>
    <source>
        <strain>49</strain>
    </source>
</reference>
<protein>
    <recommendedName>
        <fullName>Endo-1,4-beta-xylanase A</fullName>
        <shortName>Xylanase A</shortName>
        <ecNumber>3.2.1.8</ecNumber>
    </recommendedName>
    <alternativeName>
        <fullName>1,4-beta-D-xylan xylanohydrolase A</fullName>
    </alternativeName>
</protein>
<keyword id="KW-0119">Carbohydrate metabolism</keyword>
<keyword id="KW-0326">Glycosidase</keyword>
<keyword id="KW-0378">Hydrolase</keyword>
<keyword id="KW-0624">Polysaccharide degradation</keyword>
<keyword id="KW-0732">Signal</keyword>
<keyword id="KW-0858">Xylan degradation</keyword>
<accession>P23551</accession>
<comment type="function">
    <text>B.fibrisolvens is located in the rumen of ruminant animals, where it contributes to the animal's digestion of plant material by hydrolyzing hemicellulose with its xylanases.</text>
</comment>
<comment type="catalytic activity">
    <reaction>
        <text>Endohydrolysis of (1-&gt;4)-beta-D-xylosidic linkages in xylans.</text>
        <dbReference type="EC" id="3.2.1.8"/>
    </reaction>
</comment>
<comment type="pathway">
    <text>Glycan degradation; xylan degradation.</text>
</comment>
<comment type="similarity">
    <text evidence="6">Belongs to the glycosyl hydrolase 10 (cellulase F) family.</text>
</comment>
<name>XYNA_BUTFI</name>
<feature type="signal peptide" evidence="2">
    <location>
        <begin position="1"/>
        <end position="33"/>
    </location>
</feature>
<feature type="chain" id="PRO_0000007970" description="Endo-1,4-beta-xylanase A">
    <location>
        <begin position="34"/>
        <end position="411"/>
    </location>
</feature>
<feature type="domain" description="GH10" evidence="3">
    <location>
        <begin position="34"/>
        <end position="382"/>
    </location>
</feature>
<feature type="region of interest" description="Disordered" evidence="5">
    <location>
        <begin position="387"/>
        <end position="411"/>
    </location>
</feature>
<feature type="compositionally biased region" description="Pro residues" evidence="5">
    <location>
        <begin position="398"/>
        <end position="411"/>
    </location>
</feature>
<feature type="active site" description="Proton donor" evidence="1">
    <location>
        <position position="201"/>
    </location>
</feature>
<feature type="active site" description="Nucleophile" evidence="4">
    <location>
        <position position="311"/>
    </location>
</feature>
<evidence type="ECO:0000250" key="1"/>
<evidence type="ECO:0000255" key="2"/>
<evidence type="ECO:0000255" key="3">
    <source>
        <dbReference type="PROSITE-ProRule" id="PRU01096"/>
    </source>
</evidence>
<evidence type="ECO:0000255" key="4">
    <source>
        <dbReference type="PROSITE-ProRule" id="PRU10061"/>
    </source>
</evidence>
<evidence type="ECO:0000256" key="5">
    <source>
        <dbReference type="SAM" id="MobiDB-lite"/>
    </source>
</evidence>
<evidence type="ECO:0000305" key="6"/>